<evidence type="ECO:0000255" key="1">
    <source>
        <dbReference type="HAMAP-Rule" id="MF_01188"/>
    </source>
</evidence>
<evidence type="ECO:0000256" key="2">
    <source>
        <dbReference type="SAM" id="MobiDB-lite"/>
    </source>
</evidence>
<evidence type="ECO:0000305" key="3"/>
<name>YGIB_ECOUT</name>
<protein>
    <recommendedName>
        <fullName evidence="1">UPF0441 protein YgiB</fullName>
    </recommendedName>
</protein>
<gene>
    <name evidence="1" type="primary">ygiB</name>
    <name type="ordered locus">UTI89_C3471</name>
</gene>
<reference key="1">
    <citation type="journal article" date="2006" name="Proc. Natl. Acad. Sci. U.S.A.">
        <title>Identification of genes subject to positive selection in uropathogenic strains of Escherichia coli: a comparative genomics approach.</title>
        <authorList>
            <person name="Chen S.L."/>
            <person name="Hung C.-S."/>
            <person name="Xu J."/>
            <person name="Reigstad C.S."/>
            <person name="Magrini V."/>
            <person name="Sabo A."/>
            <person name="Blasiar D."/>
            <person name="Bieri T."/>
            <person name="Meyer R.R."/>
            <person name="Ozersky P."/>
            <person name="Armstrong J.R."/>
            <person name="Fulton R.S."/>
            <person name="Latreille J.P."/>
            <person name="Spieth J."/>
            <person name="Hooton T.M."/>
            <person name="Mardis E.R."/>
            <person name="Hultgren S.J."/>
            <person name="Gordon J.I."/>
        </authorList>
    </citation>
    <scope>NUCLEOTIDE SEQUENCE [LARGE SCALE GENOMIC DNA]</scope>
    <source>
        <strain>UTI89 / UPEC</strain>
    </source>
</reference>
<comment type="similarity">
    <text evidence="1">Belongs to the UPF0441 family.</text>
</comment>
<comment type="sequence caution" evidence="3">
    <conflict type="erroneous initiation">
        <sequence resource="EMBL-CDS" id="ABE08918"/>
    </conflict>
</comment>
<accession>Q1R6U6</accession>
<dbReference type="EMBL" id="CP000243">
    <property type="protein sequence ID" value="ABE08918.1"/>
    <property type="status" value="ALT_INIT"/>
    <property type="molecule type" value="Genomic_DNA"/>
</dbReference>
<dbReference type="RefSeq" id="WP_000831543.1">
    <property type="nucleotide sequence ID" value="NZ_CP064825.1"/>
</dbReference>
<dbReference type="SMR" id="Q1R6U6"/>
<dbReference type="KEGG" id="eci:UTI89_C3471"/>
<dbReference type="HOGENOM" id="CLU_095624_0_0_6"/>
<dbReference type="Proteomes" id="UP000001952">
    <property type="component" value="Chromosome"/>
</dbReference>
<dbReference type="HAMAP" id="MF_01188">
    <property type="entry name" value="UPF0441"/>
    <property type="match status" value="1"/>
</dbReference>
<dbReference type="InterPro" id="IPR009576">
    <property type="entry name" value="Biofilm_formation_YgiB"/>
</dbReference>
<dbReference type="NCBIfam" id="NF008655">
    <property type="entry name" value="PRK11653.1"/>
    <property type="match status" value="1"/>
</dbReference>
<dbReference type="Pfam" id="PF06693">
    <property type="entry name" value="DUF1190"/>
    <property type="match status" value="1"/>
</dbReference>
<proteinExistence type="inferred from homology"/>
<organism>
    <name type="scientific">Escherichia coli (strain UTI89 / UPEC)</name>
    <dbReference type="NCBI Taxonomy" id="364106"/>
    <lineage>
        <taxon>Bacteria</taxon>
        <taxon>Pseudomonadati</taxon>
        <taxon>Pseudomonadota</taxon>
        <taxon>Gammaproteobacteria</taxon>
        <taxon>Enterobacterales</taxon>
        <taxon>Enterobacteriaceae</taxon>
        <taxon>Escherichia</taxon>
    </lineage>
</organism>
<feature type="chain" id="PRO_0000293634" description="UPF0441 protein YgiB">
    <location>
        <begin position="1"/>
        <end position="223"/>
    </location>
</feature>
<feature type="region of interest" description="Disordered" evidence="2">
    <location>
        <begin position="178"/>
        <end position="223"/>
    </location>
</feature>
<feature type="compositionally biased region" description="Low complexity" evidence="2">
    <location>
        <begin position="178"/>
        <end position="195"/>
    </location>
</feature>
<feature type="compositionally biased region" description="Polar residues" evidence="2">
    <location>
        <begin position="204"/>
        <end position="223"/>
    </location>
</feature>
<sequence length="223" mass="23479">MKRTKSIRHASFRKNWSARHLTPVALAVATVFMLAGCEKSDETVSLYQNADDCSAANPGKSAECTTAYNNALKEAERTAPKYATREDCVAEFGEGQCQQAPAQAGMAPENQAQAQQSSGSFWMPLMAGYMMGRLMGGGAGFAQQPLFSSKNPASPAYGKYTDATGKNYGAAQPGRTMTVPKTAMAPKPATTTTVTRGGFGESVAKQSTMQRSATGTSSRSMGG</sequence>